<keyword id="KW-0249">Electron transport</keyword>
<keyword id="KW-0349">Heme</keyword>
<keyword id="KW-0408">Iron</keyword>
<keyword id="KW-0472">Membrane</keyword>
<keyword id="KW-0479">Metal-binding</keyword>
<keyword id="KW-0496">Mitochondrion</keyword>
<keyword id="KW-0999">Mitochondrion inner membrane</keyword>
<keyword id="KW-0679">Respiratory chain</keyword>
<keyword id="KW-0812">Transmembrane</keyword>
<keyword id="KW-1133">Transmembrane helix</keyword>
<keyword id="KW-0813">Transport</keyword>
<keyword id="KW-0830">Ubiquinone</keyword>
<proteinExistence type="inferred from homology"/>
<protein>
    <recommendedName>
        <fullName>Cytochrome b</fullName>
    </recommendedName>
    <alternativeName>
        <fullName>Complex III subunit 3</fullName>
    </alternativeName>
    <alternativeName>
        <fullName>Complex III subunit III</fullName>
    </alternativeName>
    <alternativeName>
        <fullName>Cytochrome b-c1 complex subunit 3</fullName>
    </alternativeName>
    <alternativeName>
        <fullName>Ubiquinol-cytochrome-c reductase complex cytochrome b subunit</fullName>
    </alternativeName>
</protein>
<accession>O48309</accession>
<reference key="1">
    <citation type="submission" date="1997-09" db="EMBL/GenBank/DDBJ databases">
        <authorList>
            <person name="Su B."/>
            <person name="Wang Y.X."/>
            <person name="Lan H."/>
            <person name="Wang W."/>
            <person name="Zhang Y.P."/>
        </authorList>
    </citation>
    <scope>NUCLEOTIDE SEQUENCE [GENOMIC DNA]</scope>
</reference>
<comment type="function">
    <text evidence="2">Component of the ubiquinol-cytochrome c reductase complex (complex III or cytochrome b-c1 complex) that is part of the mitochondrial respiratory chain. The b-c1 complex mediates electron transfer from ubiquinol to cytochrome c. Contributes to the generation of a proton gradient across the mitochondrial membrane that is then used for ATP synthesis.</text>
</comment>
<comment type="cofactor">
    <cofactor evidence="2">
        <name>heme b</name>
        <dbReference type="ChEBI" id="CHEBI:60344"/>
    </cofactor>
    <text evidence="2">Binds 2 heme b groups non-covalently.</text>
</comment>
<comment type="subunit">
    <text evidence="2">The cytochrome bc1 complex contains 11 subunits: 3 respiratory subunits (MT-CYB, CYC1 and UQCRFS1), 2 core proteins (UQCRC1 and UQCRC2) and 6 low-molecular weight proteins (UQCRH/QCR6, UQCRB/QCR7, UQCRQ/QCR8, UQCR10/QCR9, UQCR11/QCR10 and a cleavage product of UQCRFS1). This cytochrome bc1 complex then forms a dimer.</text>
</comment>
<comment type="subcellular location">
    <subcellularLocation>
        <location evidence="2">Mitochondrion inner membrane</location>
        <topology evidence="2">Multi-pass membrane protein</topology>
    </subcellularLocation>
</comment>
<comment type="miscellaneous">
    <text evidence="1">Heme 1 (or BL or b562) is low-potential and absorbs at about 562 nm, and heme 2 (or BH or b566) is high-potential and absorbs at about 566 nm.</text>
</comment>
<comment type="similarity">
    <text evidence="3 4">Belongs to the cytochrome b family.</text>
</comment>
<comment type="caution">
    <text evidence="2">The full-length protein contains only eight transmembrane helices, not nine as predicted by bioinformatics tools.</text>
</comment>
<feature type="chain" id="PRO_0000061208" description="Cytochrome b">
    <location>
        <begin position="1"/>
        <end position="379"/>
    </location>
</feature>
<feature type="transmembrane region" description="Helical" evidence="2">
    <location>
        <begin position="33"/>
        <end position="53"/>
    </location>
</feature>
<feature type="transmembrane region" description="Helical" evidence="2">
    <location>
        <begin position="77"/>
        <end position="98"/>
    </location>
</feature>
<feature type="transmembrane region" description="Helical" evidence="2">
    <location>
        <begin position="113"/>
        <end position="133"/>
    </location>
</feature>
<feature type="transmembrane region" description="Helical" evidence="2">
    <location>
        <begin position="178"/>
        <end position="198"/>
    </location>
</feature>
<feature type="transmembrane region" description="Helical" evidence="2">
    <location>
        <begin position="226"/>
        <end position="246"/>
    </location>
</feature>
<feature type="transmembrane region" description="Helical" evidence="2">
    <location>
        <begin position="288"/>
        <end position="308"/>
    </location>
</feature>
<feature type="transmembrane region" description="Helical" evidence="2">
    <location>
        <begin position="320"/>
        <end position="340"/>
    </location>
</feature>
<feature type="transmembrane region" description="Helical" evidence="2">
    <location>
        <begin position="347"/>
        <end position="367"/>
    </location>
</feature>
<feature type="binding site" description="axial binding residue" evidence="2">
    <location>
        <position position="83"/>
    </location>
    <ligand>
        <name>heme b</name>
        <dbReference type="ChEBI" id="CHEBI:60344"/>
        <label>b562</label>
    </ligand>
    <ligandPart>
        <name>Fe</name>
        <dbReference type="ChEBI" id="CHEBI:18248"/>
    </ligandPart>
</feature>
<feature type="binding site" description="axial binding residue" evidence="2">
    <location>
        <position position="97"/>
    </location>
    <ligand>
        <name>heme b</name>
        <dbReference type="ChEBI" id="CHEBI:60344"/>
        <label>b566</label>
    </ligand>
    <ligandPart>
        <name>Fe</name>
        <dbReference type="ChEBI" id="CHEBI:18248"/>
    </ligandPart>
</feature>
<feature type="binding site" description="axial binding residue" evidence="2">
    <location>
        <position position="182"/>
    </location>
    <ligand>
        <name>heme b</name>
        <dbReference type="ChEBI" id="CHEBI:60344"/>
        <label>b562</label>
    </ligand>
    <ligandPart>
        <name>Fe</name>
        <dbReference type="ChEBI" id="CHEBI:18248"/>
    </ligandPart>
</feature>
<feature type="binding site" description="axial binding residue" evidence="2">
    <location>
        <position position="196"/>
    </location>
    <ligand>
        <name>heme b</name>
        <dbReference type="ChEBI" id="CHEBI:60344"/>
        <label>b566</label>
    </ligand>
    <ligandPart>
        <name>Fe</name>
        <dbReference type="ChEBI" id="CHEBI:18248"/>
    </ligandPart>
</feature>
<feature type="binding site" evidence="2">
    <location>
        <position position="201"/>
    </location>
    <ligand>
        <name>a ubiquinone</name>
        <dbReference type="ChEBI" id="CHEBI:16389"/>
    </ligand>
</feature>
<dbReference type="EMBL" id="AF026888">
    <property type="protein sequence ID" value="AAB94610.1"/>
    <property type="molecule type" value="Genomic_DNA"/>
</dbReference>
<dbReference type="SMR" id="O48309"/>
<dbReference type="GO" id="GO:0005743">
    <property type="term" value="C:mitochondrial inner membrane"/>
    <property type="evidence" value="ECO:0007669"/>
    <property type="project" value="UniProtKB-SubCell"/>
</dbReference>
<dbReference type="GO" id="GO:0045275">
    <property type="term" value="C:respiratory chain complex III"/>
    <property type="evidence" value="ECO:0007669"/>
    <property type="project" value="InterPro"/>
</dbReference>
<dbReference type="GO" id="GO:0046872">
    <property type="term" value="F:metal ion binding"/>
    <property type="evidence" value="ECO:0007669"/>
    <property type="project" value="UniProtKB-KW"/>
</dbReference>
<dbReference type="GO" id="GO:0008121">
    <property type="term" value="F:ubiquinol-cytochrome-c reductase activity"/>
    <property type="evidence" value="ECO:0007669"/>
    <property type="project" value="InterPro"/>
</dbReference>
<dbReference type="GO" id="GO:0006122">
    <property type="term" value="P:mitochondrial electron transport, ubiquinol to cytochrome c"/>
    <property type="evidence" value="ECO:0007669"/>
    <property type="project" value="TreeGrafter"/>
</dbReference>
<dbReference type="CDD" id="cd00290">
    <property type="entry name" value="cytochrome_b_C"/>
    <property type="match status" value="1"/>
</dbReference>
<dbReference type="CDD" id="cd00284">
    <property type="entry name" value="Cytochrome_b_N"/>
    <property type="match status" value="1"/>
</dbReference>
<dbReference type="FunFam" id="1.20.810.10:FF:000002">
    <property type="entry name" value="Cytochrome b"/>
    <property type="match status" value="1"/>
</dbReference>
<dbReference type="Gene3D" id="1.20.810.10">
    <property type="entry name" value="Cytochrome Bc1 Complex, Chain C"/>
    <property type="match status" value="1"/>
</dbReference>
<dbReference type="InterPro" id="IPR005798">
    <property type="entry name" value="Cyt_b/b6_C"/>
</dbReference>
<dbReference type="InterPro" id="IPR036150">
    <property type="entry name" value="Cyt_b/b6_C_sf"/>
</dbReference>
<dbReference type="InterPro" id="IPR005797">
    <property type="entry name" value="Cyt_b/b6_N"/>
</dbReference>
<dbReference type="InterPro" id="IPR027387">
    <property type="entry name" value="Cytb/b6-like_sf"/>
</dbReference>
<dbReference type="InterPro" id="IPR030689">
    <property type="entry name" value="Cytochrome_b"/>
</dbReference>
<dbReference type="InterPro" id="IPR048260">
    <property type="entry name" value="Cytochrome_b_C_euk/bac"/>
</dbReference>
<dbReference type="InterPro" id="IPR048259">
    <property type="entry name" value="Cytochrome_b_N_euk/bac"/>
</dbReference>
<dbReference type="InterPro" id="IPR016174">
    <property type="entry name" value="Di-haem_cyt_TM"/>
</dbReference>
<dbReference type="PANTHER" id="PTHR19271">
    <property type="entry name" value="CYTOCHROME B"/>
    <property type="match status" value="1"/>
</dbReference>
<dbReference type="PANTHER" id="PTHR19271:SF16">
    <property type="entry name" value="CYTOCHROME B"/>
    <property type="match status" value="1"/>
</dbReference>
<dbReference type="Pfam" id="PF00032">
    <property type="entry name" value="Cytochrom_B_C"/>
    <property type="match status" value="1"/>
</dbReference>
<dbReference type="Pfam" id="PF00033">
    <property type="entry name" value="Cytochrome_B"/>
    <property type="match status" value="1"/>
</dbReference>
<dbReference type="PIRSF" id="PIRSF038885">
    <property type="entry name" value="COB"/>
    <property type="match status" value="1"/>
</dbReference>
<dbReference type="SUPFAM" id="SSF81648">
    <property type="entry name" value="a domain/subunit of cytochrome bc1 complex (Ubiquinol-cytochrome c reductase)"/>
    <property type="match status" value="1"/>
</dbReference>
<dbReference type="SUPFAM" id="SSF81342">
    <property type="entry name" value="Transmembrane di-heme cytochromes"/>
    <property type="match status" value="1"/>
</dbReference>
<dbReference type="PROSITE" id="PS51003">
    <property type="entry name" value="CYTB_CTER"/>
    <property type="match status" value="1"/>
</dbReference>
<dbReference type="PROSITE" id="PS51002">
    <property type="entry name" value="CYTB_NTER"/>
    <property type="match status" value="1"/>
</dbReference>
<gene>
    <name type="primary">MT-CYB</name>
    <name type="synonym">COB</name>
    <name type="synonym">CYTB</name>
    <name type="synonym">MTCYB</name>
</gene>
<sequence>MTNIRKSHPLMKIVNNAFIDLPAPSNISSWWNFGSLLGICLIIQILTGLFLAMHYTSDTMTAFSSVTHICRDVNYGWIIRYMHANGASMFFICLFMHVGRGLYYGSYTFLETWNIGVILLFTVMATAFMGYVLPWGQMSFWGATVITNLLSAIPYIGTNLVEWIWGGFSVDKATLTRFFAFHFILPFIIAALAMVHLLFLHETGSNNPTGITSDMDKIPFHPYYTIKDILGVLLLILVLMTLVLFTPDLLGDPDNYTPANPLNTPPHIKPEWYFLFAYAILRSIPNKLGGVLALVLSILILIFMPLLHTSKQRSMMFRPLSQCLFWILVADLLTLTWIGGQPVEHPYIIIGQLASIMYFLLILVMMPVASMVENNLLKW</sequence>
<evidence type="ECO:0000250" key="1"/>
<evidence type="ECO:0000250" key="2">
    <source>
        <dbReference type="UniProtKB" id="P00157"/>
    </source>
</evidence>
<evidence type="ECO:0000255" key="3">
    <source>
        <dbReference type="PROSITE-ProRule" id="PRU00967"/>
    </source>
</evidence>
<evidence type="ECO:0000255" key="4">
    <source>
        <dbReference type="PROSITE-ProRule" id="PRU00968"/>
    </source>
</evidence>
<name>CYB_MOSFU</name>
<geneLocation type="mitochondrion"/>
<organism>
    <name type="scientific">Moschus fuscus</name>
    <name type="common">Dusky musk deer</name>
    <dbReference type="NCBI Taxonomy" id="68413"/>
    <lineage>
        <taxon>Eukaryota</taxon>
        <taxon>Metazoa</taxon>
        <taxon>Chordata</taxon>
        <taxon>Craniata</taxon>
        <taxon>Vertebrata</taxon>
        <taxon>Euteleostomi</taxon>
        <taxon>Mammalia</taxon>
        <taxon>Eutheria</taxon>
        <taxon>Laurasiatheria</taxon>
        <taxon>Artiodactyla</taxon>
        <taxon>Ruminantia</taxon>
        <taxon>Pecora</taxon>
        <taxon>Moschidae</taxon>
        <taxon>Moschus</taxon>
    </lineage>
</organism>